<sequence length="95" mass="11254">MVRIRLTRMGKRHQPFYRIVVVDSRKRRDGAYIESLGYYNPLKEGEIKIDVERAVEWILKGAQPSDTVRDIFRKFGVMKRVHEIKYGKKEEATAE</sequence>
<reference key="1">
    <citation type="submission" date="2007-05" db="EMBL/GenBank/DDBJ databases">
        <title>Complete sequence of Thermotoga petrophila RKU-1.</title>
        <authorList>
            <consortium name="US DOE Joint Genome Institute"/>
            <person name="Copeland A."/>
            <person name="Lucas S."/>
            <person name="Lapidus A."/>
            <person name="Barry K."/>
            <person name="Glavina del Rio T."/>
            <person name="Dalin E."/>
            <person name="Tice H."/>
            <person name="Pitluck S."/>
            <person name="Sims D."/>
            <person name="Brettin T."/>
            <person name="Bruce D."/>
            <person name="Detter J.C."/>
            <person name="Han C."/>
            <person name="Tapia R."/>
            <person name="Schmutz J."/>
            <person name="Larimer F."/>
            <person name="Land M."/>
            <person name="Hauser L."/>
            <person name="Kyrpides N."/>
            <person name="Mikhailova N."/>
            <person name="Nelson K."/>
            <person name="Gogarten J.P."/>
            <person name="Noll K."/>
            <person name="Richardson P."/>
        </authorList>
    </citation>
    <scope>NUCLEOTIDE SEQUENCE [LARGE SCALE GENOMIC DNA]</scope>
    <source>
        <strain>ATCC BAA-488 / DSM 13995 / JCM 10881 / RKU-1</strain>
    </source>
</reference>
<feature type="chain" id="PRO_1000049372" description="Small ribosomal subunit protein bS16">
    <location>
        <begin position="1"/>
        <end position="95"/>
    </location>
</feature>
<protein>
    <recommendedName>
        <fullName evidence="1">Small ribosomal subunit protein bS16</fullName>
    </recommendedName>
    <alternativeName>
        <fullName evidence="2">30S ribosomal protein S16</fullName>
    </alternativeName>
</protein>
<dbReference type="EMBL" id="CP000702">
    <property type="protein sequence ID" value="ABQ47240.1"/>
    <property type="molecule type" value="Genomic_DNA"/>
</dbReference>
<dbReference type="RefSeq" id="WP_004081979.1">
    <property type="nucleotide sequence ID" value="NC_009486.1"/>
</dbReference>
<dbReference type="SMR" id="A5IM17"/>
<dbReference type="STRING" id="390874.Tpet_1226"/>
<dbReference type="KEGG" id="tpt:Tpet_1226"/>
<dbReference type="eggNOG" id="COG0228">
    <property type="taxonomic scope" value="Bacteria"/>
</dbReference>
<dbReference type="HOGENOM" id="CLU_100590_5_0_0"/>
<dbReference type="Proteomes" id="UP000006558">
    <property type="component" value="Chromosome"/>
</dbReference>
<dbReference type="GO" id="GO:0005737">
    <property type="term" value="C:cytoplasm"/>
    <property type="evidence" value="ECO:0007669"/>
    <property type="project" value="UniProtKB-ARBA"/>
</dbReference>
<dbReference type="GO" id="GO:0015935">
    <property type="term" value="C:small ribosomal subunit"/>
    <property type="evidence" value="ECO:0007669"/>
    <property type="project" value="TreeGrafter"/>
</dbReference>
<dbReference type="GO" id="GO:0003735">
    <property type="term" value="F:structural constituent of ribosome"/>
    <property type="evidence" value="ECO:0007669"/>
    <property type="project" value="InterPro"/>
</dbReference>
<dbReference type="GO" id="GO:0006412">
    <property type="term" value="P:translation"/>
    <property type="evidence" value="ECO:0007669"/>
    <property type="project" value="UniProtKB-UniRule"/>
</dbReference>
<dbReference type="FunFam" id="3.30.1320.10:FF:000005">
    <property type="entry name" value="30S ribosomal protein S16"/>
    <property type="match status" value="1"/>
</dbReference>
<dbReference type="Gene3D" id="3.30.1320.10">
    <property type="match status" value="1"/>
</dbReference>
<dbReference type="HAMAP" id="MF_00385">
    <property type="entry name" value="Ribosomal_bS16"/>
    <property type="match status" value="1"/>
</dbReference>
<dbReference type="InterPro" id="IPR000307">
    <property type="entry name" value="Ribosomal_bS16"/>
</dbReference>
<dbReference type="InterPro" id="IPR020592">
    <property type="entry name" value="Ribosomal_bS16_CS"/>
</dbReference>
<dbReference type="InterPro" id="IPR023803">
    <property type="entry name" value="Ribosomal_bS16_dom_sf"/>
</dbReference>
<dbReference type="NCBIfam" id="TIGR00002">
    <property type="entry name" value="S16"/>
    <property type="match status" value="1"/>
</dbReference>
<dbReference type="PANTHER" id="PTHR12919">
    <property type="entry name" value="30S RIBOSOMAL PROTEIN S16"/>
    <property type="match status" value="1"/>
</dbReference>
<dbReference type="PANTHER" id="PTHR12919:SF20">
    <property type="entry name" value="SMALL RIBOSOMAL SUBUNIT PROTEIN BS16M"/>
    <property type="match status" value="1"/>
</dbReference>
<dbReference type="Pfam" id="PF00886">
    <property type="entry name" value="Ribosomal_S16"/>
    <property type="match status" value="1"/>
</dbReference>
<dbReference type="SUPFAM" id="SSF54565">
    <property type="entry name" value="Ribosomal protein S16"/>
    <property type="match status" value="1"/>
</dbReference>
<dbReference type="PROSITE" id="PS00732">
    <property type="entry name" value="RIBOSOMAL_S16"/>
    <property type="match status" value="1"/>
</dbReference>
<accession>A5IM17</accession>
<gene>
    <name evidence="1" type="primary">rpsP</name>
    <name type="ordered locus">Tpet_1226</name>
</gene>
<name>RS16_THEP1</name>
<keyword id="KW-0687">Ribonucleoprotein</keyword>
<keyword id="KW-0689">Ribosomal protein</keyword>
<proteinExistence type="inferred from homology"/>
<comment type="similarity">
    <text evidence="1">Belongs to the bacterial ribosomal protein bS16 family.</text>
</comment>
<evidence type="ECO:0000255" key="1">
    <source>
        <dbReference type="HAMAP-Rule" id="MF_00385"/>
    </source>
</evidence>
<evidence type="ECO:0000305" key="2"/>
<organism>
    <name type="scientific">Thermotoga petrophila (strain ATCC BAA-488 / DSM 13995 / JCM 10881 / RKU-1)</name>
    <dbReference type="NCBI Taxonomy" id="390874"/>
    <lineage>
        <taxon>Bacteria</taxon>
        <taxon>Thermotogati</taxon>
        <taxon>Thermotogota</taxon>
        <taxon>Thermotogae</taxon>
        <taxon>Thermotogales</taxon>
        <taxon>Thermotogaceae</taxon>
        <taxon>Thermotoga</taxon>
    </lineage>
</organism>